<accession>P63316</accession>
<accession>O14800</accession>
<accession>P02590</accession>
<accession>P04463</accession>
<sequence length="161" mass="18403">MDDIYKAAVEQLTEEQKNEFKAAFDIFVLGAEDGCISTKELGKVMRMLGQNPTPEELQEMIDEVDEDGSGTVDFDEFLVMMVRCMKDDSKGKSEEELSDLFRMFDKNADGYIDLDELKIMLQATGETITEDDIEELMKDGDKNNDGRIDYDEFLEFMKGVE</sequence>
<keyword id="KW-0002">3D-structure</keyword>
<keyword id="KW-0007">Acetylation</keyword>
<keyword id="KW-0106">Calcium</keyword>
<keyword id="KW-0122">Cardiomyopathy</keyword>
<keyword id="KW-0903">Direct protein sequencing</keyword>
<keyword id="KW-0225">Disease variant</keyword>
<keyword id="KW-0479">Metal-binding</keyword>
<keyword id="KW-0514">Muscle protein</keyword>
<keyword id="KW-0597">Phosphoprotein</keyword>
<keyword id="KW-1267">Proteomics identification</keyword>
<keyword id="KW-1185">Reference proteome</keyword>
<keyword id="KW-0677">Repeat</keyword>
<proteinExistence type="evidence at protein level"/>
<feature type="chain" id="PRO_0000073697" description="Troponin C, slow skeletal and cardiac muscles">
    <location>
        <begin position="1"/>
        <end position="161"/>
    </location>
</feature>
<feature type="domain" description="EF-hand 1" evidence="2">
    <location>
        <begin position="16"/>
        <end position="51"/>
    </location>
</feature>
<feature type="domain" description="EF-hand 2" evidence="2">
    <location>
        <begin position="52"/>
        <end position="87"/>
    </location>
</feature>
<feature type="domain" description="EF-hand 3" evidence="2">
    <location>
        <begin position="92"/>
        <end position="127"/>
    </location>
</feature>
<feature type="domain" description="EF-hand 4" evidence="2">
    <location>
        <begin position="128"/>
        <end position="161"/>
    </location>
</feature>
<feature type="binding site" evidence="2">
    <location>
        <position position="65"/>
    </location>
    <ligand>
        <name>Ca(2+)</name>
        <dbReference type="ChEBI" id="CHEBI:29108"/>
        <label>1</label>
    </ligand>
</feature>
<feature type="binding site" evidence="2">
    <location>
        <position position="67"/>
    </location>
    <ligand>
        <name>Ca(2+)</name>
        <dbReference type="ChEBI" id="CHEBI:29108"/>
        <label>1</label>
    </ligand>
</feature>
<feature type="binding site" evidence="2">
    <location>
        <position position="69"/>
    </location>
    <ligand>
        <name>Ca(2+)</name>
        <dbReference type="ChEBI" id="CHEBI:29108"/>
        <label>1</label>
    </ligand>
</feature>
<feature type="binding site" evidence="2">
    <location>
        <position position="71"/>
    </location>
    <ligand>
        <name>Ca(2+)</name>
        <dbReference type="ChEBI" id="CHEBI:29108"/>
        <label>1</label>
    </ligand>
</feature>
<feature type="binding site" evidence="2">
    <location>
        <position position="76"/>
    </location>
    <ligand>
        <name>Ca(2+)</name>
        <dbReference type="ChEBI" id="CHEBI:29108"/>
        <label>1</label>
    </ligand>
</feature>
<feature type="binding site" evidence="2">
    <location>
        <position position="105"/>
    </location>
    <ligand>
        <name>Ca(2+)</name>
        <dbReference type="ChEBI" id="CHEBI:29108"/>
        <label>2</label>
    </ligand>
</feature>
<feature type="binding site" evidence="2">
    <location>
        <position position="107"/>
    </location>
    <ligand>
        <name>Ca(2+)</name>
        <dbReference type="ChEBI" id="CHEBI:29108"/>
        <label>2</label>
    </ligand>
</feature>
<feature type="binding site" evidence="2">
    <location>
        <position position="109"/>
    </location>
    <ligand>
        <name>Ca(2+)</name>
        <dbReference type="ChEBI" id="CHEBI:29108"/>
        <label>2</label>
    </ligand>
</feature>
<feature type="binding site" evidence="2">
    <location>
        <position position="111"/>
    </location>
    <ligand>
        <name>Ca(2+)</name>
        <dbReference type="ChEBI" id="CHEBI:29108"/>
        <label>2</label>
    </ligand>
</feature>
<feature type="binding site" evidence="2">
    <location>
        <position position="116"/>
    </location>
    <ligand>
        <name>Ca(2+)</name>
        <dbReference type="ChEBI" id="CHEBI:29108"/>
        <label>2</label>
    </ligand>
</feature>
<feature type="binding site" evidence="2">
    <location>
        <position position="141"/>
    </location>
    <ligand>
        <name>Ca(2+)</name>
        <dbReference type="ChEBI" id="CHEBI:29108"/>
        <label>3</label>
    </ligand>
</feature>
<feature type="binding site" evidence="2">
    <location>
        <position position="143"/>
    </location>
    <ligand>
        <name>Ca(2+)</name>
        <dbReference type="ChEBI" id="CHEBI:29108"/>
        <label>3</label>
    </ligand>
</feature>
<feature type="binding site" evidence="2">
    <location>
        <position position="145"/>
    </location>
    <ligand>
        <name>Ca(2+)</name>
        <dbReference type="ChEBI" id="CHEBI:29108"/>
        <label>3</label>
    </ligand>
</feature>
<feature type="binding site" evidence="2">
    <location>
        <position position="147"/>
    </location>
    <ligand>
        <name>Ca(2+)</name>
        <dbReference type="ChEBI" id="CHEBI:29108"/>
        <label>3</label>
    </ligand>
</feature>
<feature type="binding site" evidence="2">
    <location>
        <position position="152"/>
    </location>
    <ligand>
        <name>Ca(2+)</name>
        <dbReference type="ChEBI" id="CHEBI:29108"/>
        <label>3</label>
    </ligand>
</feature>
<feature type="modified residue" description="N-acetylmethionine" evidence="8">
    <location>
        <position position="1"/>
    </location>
</feature>
<feature type="modified residue" description="Phosphoserine" evidence="1">
    <location>
        <position position="98"/>
    </location>
</feature>
<feature type="sequence variant" id="VAR_063070" description="In CMH13; increases calcium sensitivity of the myofilaments; dbSNP:rs267607125." evidence="6 7">
    <original>A</original>
    <variation>V</variation>
    <location>
        <position position="8"/>
    </location>
</feature>
<feature type="sequence variant" id="VAR_019776" description="In CMH13; impairs protein kinase A dependent signaling from cardiac troponin I to troponin C; dbSNP:rs267607123." evidence="3 5">
    <original>L</original>
    <variation>Q</variation>
    <location>
        <position position="29"/>
    </location>
</feature>
<feature type="sequence variant" id="VAR_063071" description="In CMH13; increases calcium sensitivity of the myofilaments; dbSNP:rs267607126." evidence="6 7">
    <original>C</original>
    <variation>Y</variation>
    <location>
        <position position="84"/>
    </location>
</feature>
<feature type="sequence variant" id="VAR_063072" description="In CMH13; no changes in calcium sensitivity of the myofilaments; dbSNP:rs397516847." evidence="6 7">
    <original>E</original>
    <variation>D</variation>
    <location>
        <position position="134"/>
    </location>
</feature>
<feature type="sequence variant" id="VAR_063073" description="In CMH13; increases calcium sensitivity of the myofilaments; dbSNP:rs267607124." evidence="6 7">
    <original>D</original>
    <variation>E</variation>
    <location>
        <position position="145"/>
    </location>
</feature>
<feature type="sequence variant" id="VAR_043988" description="In CMD1Z; dbSNP:rs104893823." evidence="4">
    <original>G</original>
    <variation>D</variation>
    <location>
        <position position="159"/>
    </location>
</feature>
<feature type="sequence conflict" description="In Ref. 4; AAB91994." evidence="9" ref="4">
    <location>
        <position position="96"/>
    </location>
</feature>
<feature type="sequence conflict" description="In Ref. 1; AA sequence." evidence="9" ref="1">
    <original>D</original>
    <variation>E</variation>
    <location>
        <position position="115"/>
    </location>
</feature>
<feature type="helix" evidence="14">
    <location>
        <begin position="3"/>
        <end position="9"/>
    </location>
</feature>
<feature type="helix" evidence="14">
    <location>
        <begin position="14"/>
        <end position="25"/>
    </location>
</feature>
<feature type="turn" evidence="14">
    <location>
        <begin position="30"/>
        <end position="32"/>
    </location>
</feature>
<feature type="strand" evidence="14">
    <location>
        <begin position="35"/>
        <end position="37"/>
    </location>
</feature>
<feature type="helix" evidence="14">
    <location>
        <begin position="38"/>
        <end position="47"/>
    </location>
</feature>
<feature type="strand" evidence="12">
    <location>
        <begin position="51"/>
        <end position="53"/>
    </location>
</feature>
<feature type="helix" evidence="14">
    <location>
        <begin position="54"/>
        <end position="64"/>
    </location>
</feature>
<feature type="strand" evidence="15">
    <location>
        <begin position="66"/>
        <end position="68"/>
    </location>
</feature>
<feature type="strand" evidence="14">
    <location>
        <begin position="71"/>
        <end position="73"/>
    </location>
</feature>
<feature type="helix" evidence="14">
    <location>
        <begin position="74"/>
        <end position="85"/>
    </location>
</feature>
<feature type="turn" evidence="16">
    <location>
        <begin position="88"/>
        <end position="91"/>
    </location>
</feature>
<feature type="helix" evidence="15">
    <location>
        <begin position="94"/>
        <end position="104"/>
    </location>
</feature>
<feature type="strand" evidence="13">
    <location>
        <begin position="106"/>
        <end position="108"/>
    </location>
</feature>
<feature type="strand" evidence="15">
    <location>
        <begin position="109"/>
        <end position="112"/>
    </location>
</feature>
<feature type="helix" evidence="15">
    <location>
        <begin position="114"/>
        <end position="123"/>
    </location>
</feature>
<feature type="strand" evidence="10">
    <location>
        <begin position="124"/>
        <end position="126"/>
    </location>
</feature>
<feature type="helix" evidence="15">
    <location>
        <begin position="130"/>
        <end position="140"/>
    </location>
</feature>
<feature type="strand" evidence="15">
    <location>
        <begin position="144"/>
        <end position="149"/>
    </location>
</feature>
<feature type="helix" evidence="15">
    <location>
        <begin position="150"/>
        <end position="157"/>
    </location>
</feature>
<feature type="turn" evidence="11">
    <location>
        <begin position="158"/>
        <end position="160"/>
    </location>
</feature>
<dbReference type="EMBL" id="X07897">
    <property type="protein sequence ID" value="CAA30736.1"/>
    <property type="molecule type" value="mRNA"/>
</dbReference>
<dbReference type="EMBL" id="M37984">
    <property type="protein sequence ID" value="AAA36772.1"/>
    <property type="molecule type" value="Genomic_DNA"/>
</dbReference>
<dbReference type="EMBL" id="AF020769">
    <property type="protein sequence ID" value="AAB91994.1"/>
    <property type="molecule type" value="mRNA"/>
</dbReference>
<dbReference type="EMBL" id="BC030244">
    <property type="protein sequence ID" value="AAH30244.1"/>
    <property type="molecule type" value="mRNA"/>
</dbReference>
<dbReference type="CCDS" id="CCDS2857.1"/>
<dbReference type="RefSeq" id="NP_003271.1">
    <property type="nucleotide sequence ID" value="NM_003280.3"/>
</dbReference>
<dbReference type="PDB" id="1AP4">
    <property type="method" value="NMR"/>
    <property type="chains" value="A=1-89"/>
</dbReference>
<dbReference type="PDB" id="1IH0">
    <property type="method" value="NMR"/>
    <property type="chains" value="A=91-161"/>
</dbReference>
<dbReference type="PDB" id="1J1D">
    <property type="method" value="X-ray"/>
    <property type="resolution" value="2.61 A"/>
    <property type="chains" value="A/D=1-161"/>
</dbReference>
<dbReference type="PDB" id="1J1E">
    <property type="method" value="X-ray"/>
    <property type="resolution" value="3.30 A"/>
    <property type="chains" value="A/D=1-161"/>
</dbReference>
<dbReference type="PDB" id="1LXF">
    <property type="method" value="NMR"/>
    <property type="chains" value="C=1-89"/>
</dbReference>
<dbReference type="PDB" id="1MXL">
    <property type="method" value="NMR"/>
    <property type="chains" value="C=1-89"/>
</dbReference>
<dbReference type="PDB" id="1OZS">
    <property type="method" value="NMR"/>
    <property type="chains" value="A=90-161"/>
</dbReference>
<dbReference type="PDB" id="1SPY">
    <property type="method" value="NMR"/>
    <property type="chains" value="A=1-89"/>
</dbReference>
<dbReference type="PDB" id="1WRK">
    <property type="method" value="X-ray"/>
    <property type="resolution" value="2.15 A"/>
    <property type="chains" value="A/B=1-88"/>
</dbReference>
<dbReference type="PDB" id="1WRL">
    <property type="method" value="X-ray"/>
    <property type="resolution" value="2.60 A"/>
    <property type="chains" value="A/B/C/D/E/F=1-88"/>
</dbReference>
<dbReference type="PDB" id="2JT0">
    <property type="method" value="NMR"/>
    <property type="chains" value="A=1-161"/>
</dbReference>
<dbReference type="PDB" id="2JT3">
    <property type="method" value="NMR"/>
    <property type="chains" value="A=1-161"/>
</dbReference>
<dbReference type="PDB" id="2JT8">
    <property type="method" value="NMR"/>
    <property type="chains" value="A=1-161"/>
</dbReference>
<dbReference type="PDB" id="2JTZ">
    <property type="method" value="NMR"/>
    <property type="chains" value="A=1-161"/>
</dbReference>
<dbReference type="PDB" id="2JXL">
    <property type="method" value="NMR"/>
    <property type="chains" value="A=1-89"/>
</dbReference>
<dbReference type="PDB" id="2KDH">
    <property type="method" value="NMR"/>
    <property type="chains" value="A=91-161"/>
</dbReference>
<dbReference type="PDB" id="2KFX">
    <property type="method" value="NMR"/>
    <property type="chains" value="T=1-89"/>
</dbReference>
<dbReference type="PDB" id="2KGB">
    <property type="method" value="NMR"/>
    <property type="chains" value="C=1-89"/>
</dbReference>
<dbReference type="PDB" id="2KRD">
    <property type="method" value="NMR"/>
    <property type="chains" value="C=1-89"/>
</dbReference>
<dbReference type="PDB" id="2L1R">
    <property type="method" value="NMR"/>
    <property type="chains" value="A=1-89"/>
</dbReference>
<dbReference type="PDB" id="2L98">
    <property type="method" value="NMR"/>
    <property type="chains" value="A=91-161"/>
</dbReference>
<dbReference type="PDB" id="2MKP">
    <property type="method" value="NMR"/>
    <property type="chains" value="C=1-89"/>
</dbReference>
<dbReference type="PDB" id="2MLE">
    <property type="method" value="NMR"/>
    <property type="chains" value="C=91-161"/>
</dbReference>
<dbReference type="PDB" id="2MLF">
    <property type="method" value="NMR"/>
    <property type="chains" value="C=91-161"/>
</dbReference>
<dbReference type="PDB" id="2MZP">
    <property type="method" value="NMR"/>
    <property type="chains" value="C=1-89"/>
</dbReference>
<dbReference type="PDB" id="2N79">
    <property type="method" value="NMR"/>
    <property type="chains" value="C=1-89"/>
</dbReference>
<dbReference type="PDB" id="2N7L">
    <property type="method" value="NMR"/>
    <property type="chains" value="C=1-89"/>
</dbReference>
<dbReference type="PDB" id="3RV5">
    <property type="method" value="X-ray"/>
    <property type="resolution" value="2.20 A"/>
    <property type="chains" value="A/B/C/D=1-89"/>
</dbReference>
<dbReference type="PDB" id="3SD6">
    <property type="method" value="X-ray"/>
    <property type="resolution" value="1.37 A"/>
    <property type="chains" value="A=1-89"/>
</dbReference>
<dbReference type="PDB" id="3SWB">
    <property type="method" value="X-ray"/>
    <property type="resolution" value="1.67 A"/>
    <property type="chains" value="A=1-89"/>
</dbReference>
<dbReference type="PDB" id="4GJE">
    <property type="method" value="X-ray"/>
    <property type="resolution" value="1.60 A"/>
    <property type="chains" value="A=1-89"/>
</dbReference>
<dbReference type="PDB" id="4GJF">
    <property type="method" value="X-ray"/>
    <property type="resolution" value="1.90 A"/>
    <property type="chains" value="A=1-89"/>
</dbReference>
<dbReference type="PDB" id="4GJG">
    <property type="method" value="X-ray"/>
    <property type="resolution" value="2.00 A"/>
    <property type="chains" value="A=1-89"/>
</dbReference>
<dbReference type="PDB" id="4Y99">
    <property type="method" value="X-ray"/>
    <property type="resolution" value="2.00 A"/>
    <property type="chains" value="A=1-161"/>
</dbReference>
<dbReference type="PDB" id="5VLN">
    <property type="method" value="NMR"/>
    <property type="chains" value="A=1-92"/>
</dbReference>
<dbReference type="PDB" id="5W88">
    <property type="method" value="NMR"/>
    <property type="chains" value="A=1-90"/>
</dbReference>
<dbReference type="PDB" id="5WCL">
    <property type="method" value="NMR"/>
    <property type="chains" value="A=1-92"/>
</dbReference>
<dbReference type="PDB" id="6KN7">
    <property type="method" value="EM"/>
    <property type="resolution" value="6.60 A"/>
    <property type="chains" value="V/c=2-161"/>
</dbReference>
<dbReference type="PDB" id="6KN8">
    <property type="method" value="EM"/>
    <property type="resolution" value="4.80 A"/>
    <property type="chains" value="V/c=2-161"/>
</dbReference>
<dbReference type="PDB" id="6MV3">
    <property type="method" value="NMR"/>
    <property type="chains" value="A=1-92"/>
</dbReference>
<dbReference type="PDB" id="7JGI">
    <property type="method" value="NMR"/>
    <property type="chains" value="A=1-92"/>
</dbReference>
<dbReference type="PDB" id="7SC2">
    <property type="method" value="X-ray"/>
    <property type="resolution" value="1.81 A"/>
    <property type="chains" value="A=1-92"/>
</dbReference>
<dbReference type="PDB" id="7SC3">
    <property type="method" value="X-ray"/>
    <property type="resolution" value="2.23 A"/>
    <property type="chains" value="A=1-92"/>
</dbReference>
<dbReference type="PDB" id="7SUP">
    <property type="method" value="NMR"/>
    <property type="chains" value="A=2-91"/>
</dbReference>
<dbReference type="PDB" id="7SVC">
    <property type="method" value="NMR"/>
    <property type="chains" value="A=2-91"/>
</dbReference>
<dbReference type="PDB" id="7SWG">
    <property type="method" value="NMR"/>
    <property type="chains" value="A=2-91"/>
</dbReference>
<dbReference type="PDB" id="7SWI">
    <property type="method" value="NMR"/>
    <property type="chains" value="A=2-91"/>
</dbReference>
<dbReference type="PDB" id="7SXC">
    <property type="method" value="NMR"/>
    <property type="chains" value="A=2-91"/>
</dbReference>
<dbReference type="PDB" id="7SXD">
    <property type="method" value="NMR"/>
    <property type="chains" value="A=2-91"/>
</dbReference>
<dbReference type="PDB" id="7UH9">
    <property type="method" value="NMR"/>
    <property type="chains" value="A=1-92"/>
</dbReference>
<dbReference type="PDB" id="7UHA">
    <property type="method" value="NMR"/>
    <property type="chains" value="A=1-92"/>
</dbReference>
<dbReference type="PDB" id="7UTI">
    <property type="method" value="EM"/>
    <property type="resolution" value="4.80 A"/>
    <property type="chains" value="U/Z=1-161"/>
</dbReference>
<dbReference type="PDB" id="7UTL">
    <property type="method" value="EM"/>
    <property type="resolution" value="6.60 A"/>
    <property type="chains" value="U/d=1-161"/>
</dbReference>
<dbReference type="PDB" id="8FMM">
    <property type="method" value="X-ray"/>
    <property type="resolution" value="3.11 A"/>
    <property type="chains" value="A/D=1-161"/>
</dbReference>
<dbReference type="PDB" id="8FMN">
    <property type="method" value="X-ray"/>
    <property type="resolution" value="3.10 A"/>
    <property type="chains" value="A/D=1-161"/>
</dbReference>
<dbReference type="PDB" id="8FMO">
    <property type="method" value="X-ray"/>
    <property type="resolution" value="2.61 A"/>
    <property type="chains" value="A/D=1-161"/>
</dbReference>
<dbReference type="PDB" id="8FMP">
    <property type="method" value="X-ray"/>
    <property type="resolution" value="3.24 A"/>
    <property type="chains" value="A/D=1-161"/>
</dbReference>
<dbReference type="PDB" id="8FMQ">
    <property type="method" value="X-ray"/>
    <property type="resolution" value="3.25 A"/>
    <property type="chains" value="A/D=1-161"/>
</dbReference>
<dbReference type="PDB" id="8FMR">
    <property type="method" value="X-ray"/>
    <property type="resolution" value="3.24 A"/>
    <property type="chains" value="A/D=1-161"/>
</dbReference>
<dbReference type="PDB" id="8FMS">
    <property type="method" value="X-ray"/>
    <property type="resolution" value="3.44 A"/>
    <property type="chains" value="A/D=1-161"/>
</dbReference>
<dbReference type="PDB" id="8FMT">
    <property type="method" value="X-ray"/>
    <property type="resolution" value="2.80 A"/>
    <property type="chains" value="A/D=1-161"/>
</dbReference>
<dbReference type="PDBsum" id="1AP4"/>
<dbReference type="PDBsum" id="1IH0"/>
<dbReference type="PDBsum" id="1J1D"/>
<dbReference type="PDBsum" id="1J1E"/>
<dbReference type="PDBsum" id="1LXF"/>
<dbReference type="PDBsum" id="1MXL"/>
<dbReference type="PDBsum" id="1OZS"/>
<dbReference type="PDBsum" id="1SPY"/>
<dbReference type="PDBsum" id="1WRK"/>
<dbReference type="PDBsum" id="1WRL"/>
<dbReference type="PDBsum" id="2JT0"/>
<dbReference type="PDBsum" id="2JT3"/>
<dbReference type="PDBsum" id="2JT8"/>
<dbReference type="PDBsum" id="2JTZ"/>
<dbReference type="PDBsum" id="2JXL"/>
<dbReference type="PDBsum" id="2KDH"/>
<dbReference type="PDBsum" id="2KFX"/>
<dbReference type="PDBsum" id="2KGB"/>
<dbReference type="PDBsum" id="2KRD"/>
<dbReference type="PDBsum" id="2L1R"/>
<dbReference type="PDBsum" id="2L98"/>
<dbReference type="PDBsum" id="2MKP"/>
<dbReference type="PDBsum" id="2MLE"/>
<dbReference type="PDBsum" id="2MLF"/>
<dbReference type="PDBsum" id="2MZP"/>
<dbReference type="PDBsum" id="2N79"/>
<dbReference type="PDBsum" id="2N7L"/>
<dbReference type="PDBsum" id="3RV5"/>
<dbReference type="PDBsum" id="3SD6"/>
<dbReference type="PDBsum" id="3SWB"/>
<dbReference type="PDBsum" id="4GJE"/>
<dbReference type="PDBsum" id="4GJF"/>
<dbReference type="PDBsum" id="4GJG"/>
<dbReference type="PDBsum" id="4Y99"/>
<dbReference type="PDBsum" id="5VLN"/>
<dbReference type="PDBsum" id="5W88"/>
<dbReference type="PDBsum" id="5WCL"/>
<dbReference type="PDBsum" id="6KN7"/>
<dbReference type="PDBsum" id="6KN8"/>
<dbReference type="PDBsum" id="6MV3"/>
<dbReference type="PDBsum" id="7JGI"/>
<dbReference type="PDBsum" id="7SC2"/>
<dbReference type="PDBsum" id="7SC3"/>
<dbReference type="PDBsum" id="7SUP"/>
<dbReference type="PDBsum" id="7SVC"/>
<dbReference type="PDBsum" id="7SWG"/>
<dbReference type="PDBsum" id="7SWI"/>
<dbReference type="PDBsum" id="7SXC"/>
<dbReference type="PDBsum" id="7SXD"/>
<dbReference type="PDBsum" id="7UH9"/>
<dbReference type="PDBsum" id="7UHA"/>
<dbReference type="PDBsum" id="7UTI"/>
<dbReference type="PDBsum" id="7UTL"/>
<dbReference type="PDBsum" id="8FMM"/>
<dbReference type="PDBsum" id="8FMN"/>
<dbReference type="PDBsum" id="8FMO"/>
<dbReference type="PDBsum" id="8FMP"/>
<dbReference type="PDBsum" id="8FMQ"/>
<dbReference type="PDBsum" id="8FMR"/>
<dbReference type="PDBsum" id="8FMS"/>
<dbReference type="PDBsum" id="8FMT"/>
<dbReference type="BMRB" id="P63316"/>
<dbReference type="EMDB" id="EMD-0728"/>
<dbReference type="EMDB" id="EMD-0729"/>
<dbReference type="SMR" id="P63316"/>
<dbReference type="BioGRID" id="112988">
    <property type="interactions" value="30"/>
</dbReference>
<dbReference type="ComplexPortal" id="CPX-3280">
    <property type="entry name" value="Cardiac Troponin complex"/>
</dbReference>
<dbReference type="CORUM" id="P63316"/>
<dbReference type="FunCoup" id="P63316">
    <property type="interactions" value="401"/>
</dbReference>
<dbReference type="IntAct" id="P63316">
    <property type="interactions" value="22"/>
</dbReference>
<dbReference type="STRING" id="9606.ENSP00000232975"/>
<dbReference type="BindingDB" id="P63316"/>
<dbReference type="ChEMBL" id="CHEMBL2066"/>
<dbReference type="DrugBank" id="DB03944">
    <property type="generic name" value="5-[1-(3,4-Dimethoxy-Benzoyl)-1,2,3,4-Tetrahydro-Quinolin-6-Yl]-6-Methyl-3,6-Dihydro-[1,3,4]Thiadiazin-2-One"/>
</dbReference>
<dbReference type="DrugBank" id="DB01375">
    <property type="generic name" value="Aluminium monostearate"/>
</dbReference>
<dbReference type="DrugBank" id="DB01244">
    <property type="generic name" value="Bepridil"/>
</dbReference>
<dbReference type="DrugBank" id="DB01373">
    <property type="generic name" value="Calcium"/>
</dbReference>
<dbReference type="DrugBank" id="DB01023">
    <property type="generic name" value="Felodipine"/>
</dbReference>
<dbReference type="DrugBank" id="DB00922">
    <property type="generic name" value="Levosimendan"/>
</dbReference>
<dbReference type="DrugBank" id="DB04513">
    <property type="generic name" value="N-(6-Aminohexyl)-5-Chloro-1-Naphthalenesulfonamide"/>
</dbReference>
<dbReference type="DrugBank" id="DB00831">
    <property type="generic name" value="Trifluoperazine"/>
</dbReference>
<dbReference type="DrugCentral" id="P63316"/>
<dbReference type="GlyGen" id="P63316">
    <property type="glycosylation" value="2 sites"/>
</dbReference>
<dbReference type="iPTMnet" id="P63316"/>
<dbReference type="PhosphoSitePlus" id="P63316"/>
<dbReference type="BioMuta" id="TNNC1"/>
<dbReference type="DMDM" id="54042075"/>
<dbReference type="jPOST" id="P63316"/>
<dbReference type="MassIVE" id="P63316"/>
<dbReference type="PaxDb" id="9606-ENSP00000232975"/>
<dbReference type="PeptideAtlas" id="P63316"/>
<dbReference type="ProteomicsDB" id="57520"/>
<dbReference type="Pumba" id="P63316"/>
<dbReference type="ABCD" id="P63316">
    <property type="antibodies" value="3 sequenced antibodies"/>
</dbReference>
<dbReference type="Antibodypedia" id="3730">
    <property type="antibodies" value="463 antibodies from 34 providers"/>
</dbReference>
<dbReference type="DNASU" id="7134"/>
<dbReference type="Ensembl" id="ENST00000232975.8">
    <property type="protein sequence ID" value="ENSP00000232975.3"/>
    <property type="gene ID" value="ENSG00000114854.8"/>
</dbReference>
<dbReference type="GeneID" id="7134"/>
<dbReference type="KEGG" id="hsa:7134"/>
<dbReference type="MANE-Select" id="ENST00000232975.8">
    <property type="protein sequence ID" value="ENSP00000232975.3"/>
    <property type="RefSeq nucleotide sequence ID" value="NM_003280.3"/>
    <property type="RefSeq protein sequence ID" value="NP_003271.1"/>
</dbReference>
<dbReference type="AGR" id="HGNC:11943"/>
<dbReference type="CTD" id="7134"/>
<dbReference type="DisGeNET" id="7134"/>
<dbReference type="GeneCards" id="TNNC1"/>
<dbReference type="GeneReviews" id="TNNC1"/>
<dbReference type="HGNC" id="HGNC:11943">
    <property type="gene designation" value="TNNC1"/>
</dbReference>
<dbReference type="HPA" id="ENSG00000114854">
    <property type="expression patterns" value="Group enriched (heart muscle, skeletal muscle, tongue)"/>
</dbReference>
<dbReference type="MalaCards" id="TNNC1"/>
<dbReference type="MIM" id="191040">
    <property type="type" value="gene"/>
</dbReference>
<dbReference type="MIM" id="611879">
    <property type="type" value="phenotype"/>
</dbReference>
<dbReference type="MIM" id="613243">
    <property type="type" value="phenotype"/>
</dbReference>
<dbReference type="neXtProt" id="NX_P63316"/>
<dbReference type="OpenTargets" id="ENSG00000114854"/>
<dbReference type="Orphanet" id="154">
    <property type="disease" value="Familial isolated dilated cardiomyopathy"/>
</dbReference>
<dbReference type="PharmGKB" id="PA36632"/>
<dbReference type="VEuPathDB" id="HostDB:ENSG00000114854"/>
<dbReference type="eggNOG" id="KOG0027">
    <property type="taxonomic scope" value="Eukaryota"/>
</dbReference>
<dbReference type="GeneTree" id="ENSGT00940000153541"/>
<dbReference type="HOGENOM" id="CLU_061288_2_5_1"/>
<dbReference type="InParanoid" id="P63316"/>
<dbReference type="OMA" id="QKSEFRA"/>
<dbReference type="OrthoDB" id="26525at2759"/>
<dbReference type="PAN-GO" id="P63316">
    <property type="GO annotations" value="6 GO annotations based on evolutionary models"/>
</dbReference>
<dbReference type="PhylomeDB" id="P63316"/>
<dbReference type="TreeFam" id="TF318191"/>
<dbReference type="PathwayCommons" id="P63316"/>
<dbReference type="Reactome" id="R-HSA-390522">
    <property type="pathway name" value="Striated Muscle Contraction"/>
</dbReference>
<dbReference type="SignaLink" id="P63316"/>
<dbReference type="BioGRID-ORCS" id="7134">
    <property type="hits" value="11 hits in 1153 CRISPR screens"/>
</dbReference>
<dbReference type="ChiTaRS" id="TNNC1">
    <property type="organism name" value="human"/>
</dbReference>
<dbReference type="EvolutionaryTrace" id="P63316"/>
<dbReference type="GeneWiki" id="Troponin_C_type_1"/>
<dbReference type="GenomeRNAi" id="7134"/>
<dbReference type="Pharos" id="P63316">
    <property type="development level" value="Tclin"/>
</dbReference>
<dbReference type="PRO" id="PR:P63316"/>
<dbReference type="Proteomes" id="UP000005640">
    <property type="component" value="Chromosome 3"/>
</dbReference>
<dbReference type="RNAct" id="P63316">
    <property type="molecule type" value="protein"/>
</dbReference>
<dbReference type="Bgee" id="ENSG00000114854">
    <property type="expression patterns" value="Expressed in gluteal muscle and 138 other cell types or tissues"/>
</dbReference>
<dbReference type="ExpressionAtlas" id="P63316">
    <property type="expression patterns" value="baseline and differential"/>
</dbReference>
<dbReference type="GO" id="GO:1990584">
    <property type="term" value="C:cardiac Troponin complex"/>
    <property type="evidence" value="ECO:0000314"/>
    <property type="project" value="CAFA"/>
</dbReference>
<dbReference type="GO" id="GO:0005829">
    <property type="term" value="C:cytosol"/>
    <property type="evidence" value="ECO:0000304"/>
    <property type="project" value="Reactome"/>
</dbReference>
<dbReference type="GO" id="GO:0030017">
    <property type="term" value="C:sarcomere"/>
    <property type="evidence" value="ECO:0000303"/>
    <property type="project" value="ComplexPortal"/>
</dbReference>
<dbReference type="GO" id="GO:0005861">
    <property type="term" value="C:troponin complex"/>
    <property type="evidence" value="ECO:0000314"/>
    <property type="project" value="UniProtKB"/>
</dbReference>
<dbReference type="GO" id="GO:0051015">
    <property type="term" value="F:actin filament binding"/>
    <property type="evidence" value="ECO:0000250"/>
    <property type="project" value="BHF-UCL"/>
</dbReference>
<dbReference type="GO" id="GO:0005509">
    <property type="term" value="F:calcium ion binding"/>
    <property type="evidence" value="ECO:0000314"/>
    <property type="project" value="BHF-UCL"/>
</dbReference>
<dbReference type="GO" id="GO:0048306">
    <property type="term" value="F:calcium-dependent protein binding"/>
    <property type="evidence" value="ECO:0000353"/>
    <property type="project" value="UniProtKB"/>
</dbReference>
<dbReference type="GO" id="GO:0042803">
    <property type="term" value="F:protein homodimerization activity"/>
    <property type="evidence" value="ECO:0000314"/>
    <property type="project" value="BHF-UCL"/>
</dbReference>
<dbReference type="GO" id="GO:0031013">
    <property type="term" value="F:troponin I binding"/>
    <property type="evidence" value="ECO:0000314"/>
    <property type="project" value="BHF-UCL"/>
</dbReference>
<dbReference type="GO" id="GO:0031014">
    <property type="term" value="F:troponin T binding"/>
    <property type="evidence" value="ECO:0000353"/>
    <property type="project" value="UniProtKB"/>
</dbReference>
<dbReference type="GO" id="GO:0060048">
    <property type="term" value="P:cardiac muscle contraction"/>
    <property type="evidence" value="ECO:0000314"/>
    <property type="project" value="CAFA"/>
</dbReference>
<dbReference type="GO" id="GO:0002086">
    <property type="term" value="P:diaphragm contraction"/>
    <property type="evidence" value="ECO:0007669"/>
    <property type="project" value="Ensembl"/>
</dbReference>
<dbReference type="GO" id="GO:0030049">
    <property type="term" value="P:muscle filament sliding"/>
    <property type="evidence" value="ECO:0000303"/>
    <property type="project" value="ComplexPortal"/>
</dbReference>
<dbReference type="GO" id="GO:0043462">
    <property type="term" value="P:regulation of ATP-dependent activity"/>
    <property type="evidence" value="ECO:0000250"/>
    <property type="project" value="BHF-UCL"/>
</dbReference>
<dbReference type="GO" id="GO:0006937">
    <property type="term" value="P:regulation of muscle contraction"/>
    <property type="evidence" value="ECO:0000314"/>
    <property type="project" value="BHF-UCL"/>
</dbReference>
<dbReference type="GO" id="GO:0032972">
    <property type="term" value="P:regulation of muscle filament sliding speed"/>
    <property type="evidence" value="ECO:0000250"/>
    <property type="project" value="BHF-UCL"/>
</dbReference>
<dbReference type="GO" id="GO:0010038">
    <property type="term" value="P:response to metal ion"/>
    <property type="evidence" value="ECO:0007669"/>
    <property type="project" value="Ensembl"/>
</dbReference>
<dbReference type="GO" id="GO:0003009">
    <property type="term" value="P:skeletal muscle contraction"/>
    <property type="evidence" value="ECO:0000318"/>
    <property type="project" value="GO_Central"/>
</dbReference>
<dbReference type="GO" id="GO:0014883">
    <property type="term" value="P:transition between fast and slow fiber"/>
    <property type="evidence" value="ECO:0007669"/>
    <property type="project" value="Ensembl"/>
</dbReference>
<dbReference type="GO" id="GO:0055010">
    <property type="term" value="P:ventricular cardiac muscle tissue morphogenesis"/>
    <property type="evidence" value="ECO:0000315"/>
    <property type="project" value="BHF-UCL"/>
</dbReference>
<dbReference type="CDD" id="cd00051">
    <property type="entry name" value="EFh"/>
    <property type="match status" value="2"/>
</dbReference>
<dbReference type="FunFam" id="1.10.238.10:FF:000033">
    <property type="entry name" value="Troponin C, slow skeletal and cardiac muscles"/>
    <property type="match status" value="1"/>
</dbReference>
<dbReference type="Gene3D" id="1.10.238.10">
    <property type="entry name" value="EF-hand"/>
    <property type="match status" value="2"/>
</dbReference>
<dbReference type="InterPro" id="IPR050230">
    <property type="entry name" value="CALM/Myosin/TropC-like"/>
</dbReference>
<dbReference type="InterPro" id="IPR011992">
    <property type="entry name" value="EF-hand-dom_pair"/>
</dbReference>
<dbReference type="InterPro" id="IPR018247">
    <property type="entry name" value="EF_Hand_1_Ca_BS"/>
</dbReference>
<dbReference type="InterPro" id="IPR002048">
    <property type="entry name" value="EF_hand_dom"/>
</dbReference>
<dbReference type="PANTHER" id="PTHR23048">
    <property type="entry name" value="MYOSIN LIGHT CHAIN 1, 3"/>
    <property type="match status" value="1"/>
</dbReference>
<dbReference type="PANTHER" id="PTHR23048:SF47">
    <property type="entry name" value="TROPONIN C1, SLOW SKELETAL AND CARDIAC TYPE"/>
    <property type="match status" value="1"/>
</dbReference>
<dbReference type="Pfam" id="PF13499">
    <property type="entry name" value="EF-hand_7"/>
    <property type="match status" value="1"/>
</dbReference>
<dbReference type="Pfam" id="PF13833">
    <property type="entry name" value="EF-hand_8"/>
    <property type="match status" value="1"/>
</dbReference>
<dbReference type="PRINTS" id="PR00450">
    <property type="entry name" value="RECOVERIN"/>
</dbReference>
<dbReference type="SMART" id="SM00054">
    <property type="entry name" value="EFh"/>
    <property type="match status" value="4"/>
</dbReference>
<dbReference type="SUPFAM" id="SSF47473">
    <property type="entry name" value="EF-hand"/>
    <property type="match status" value="1"/>
</dbReference>
<dbReference type="PROSITE" id="PS00018">
    <property type="entry name" value="EF_HAND_1"/>
    <property type="match status" value="3"/>
</dbReference>
<dbReference type="PROSITE" id="PS50222">
    <property type="entry name" value="EF_HAND_2"/>
    <property type="match status" value="4"/>
</dbReference>
<name>TNNC1_HUMAN</name>
<evidence type="ECO:0000250" key="1">
    <source>
        <dbReference type="UniProtKB" id="P19123"/>
    </source>
</evidence>
<evidence type="ECO:0000255" key="2">
    <source>
        <dbReference type="PROSITE-ProRule" id="PRU00448"/>
    </source>
</evidence>
<evidence type="ECO:0000269" key="3">
    <source>
    </source>
</evidence>
<evidence type="ECO:0000269" key="4">
    <source>
    </source>
</evidence>
<evidence type="ECO:0000269" key="5">
    <source>
    </source>
</evidence>
<evidence type="ECO:0000269" key="6">
    <source>
    </source>
</evidence>
<evidence type="ECO:0000269" key="7">
    <source>
    </source>
</evidence>
<evidence type="ECO:0000269" key="8">
    <source>
    </source>
</evidence>
<evidence type="ECO:0000305" key="9"/>
<evidence type="ECO:0007829" key="10">
    <source>
        <dbReference type="PDB" id="1J1D"/>
    </source>
</evidence>
<evidence type="ECO:0007829" key="11">
    <source>
        <dbReference type="PDB" id="2JT0"/>
    </source>
</evidence>
<evidence type="ECO:0007829" key="12">
    <source>
        <dbReference type="PDB" id="2JT8"/>
    </source>
</evidence>
<evidence type="ECO:0007829" key="13">
    <source>
        <dbReference type="PDB" id="2MLE"/>
    </source>
</evidence>
<evidence type="ECO:0007829" key="14">
    <source>
        <dbReference type="PDB" id="3SD6"/>
    </source>
</evidence>
<evidence type="ECO:0007829" key="15">
    <source>
        <dbReference type="PDB" id="4Y99"/>
    </source>
</evidence>
<evidence type="ECO:0007829" key="16">
    <source>
        <dbReference type="PDB" id="7SC3"/>
    </source>
</evidence>
<reference key="1">
    <citation type="journal article" date="1986" name="Muscle Nerve">
        <title>The amino acid sequence of human cardiac troponin-C.</title>
        <authorList>
            <person name="Roher A."/>
            <person name="Lieska N."/>
            <person name="Spitz W."/>
        </authorList>
    </citation>
    <scope>PROTEIN SEQUENCE</scope>
    <scope>ACETYLATION AT MET-1</scope>
    <source>
        <tissue>Heart muscle</tissue>
    </source>
</reference>
<reference key="2">
    <citation type="journal article" date="1988" name="J. Mol. Biol.">
        <title>Differential expression of slow and fast skeletal muscle troponin C. Slow skeletal muscle troponin C is expressed in human fibroblasts.</title>
        <authorList>
            <person name="Gahlmann R."/>
            <person name="Wade R."/>
            <person name="Gunning R."/>
            <person name="Kedes L."/>
        </authorList>
    </citation>
    <scope>NUCLEOTIDE SEQUENCE [MRNA]</scope>
    <source>
        <tissue>Slow skeletal muscle</tissue>
    </source>
</reference>
<reference key="3">
    <citation type="journal article" date="1990" name="J. Biol. Chem.">
        <title>Cloning, structural analysis, and expression of the human slow twitch skeletal muscle/cardiac troponin C gene.</title>
        <authorList>
            <person name="Schreier T."/>
            <person name="Kedes L."/>
            <person name="Gahlmann R."/>
        </authorList>
    </citation>
    <scope>NUCLEOTIDE SEQUENCE [GENOMIC DNA]</scope>
    <source>
        <tissue>Slow skeletal muscle</tissue>
    </source>
</reference>
<reference key="4">
    <citation type="submission" date="1997-08" db="EMBL/GenBank/DDBJ databases">
        <title>H. sapiens mRNA for cardiac ventricular troponin C in idiopathic dilated cardiomyopathy.</title>
        <authorList>
            <person name="Margossian S.S."/>
            <person name="Yang F."/>
            <person name="Umeda P.K."/>
            <person name="Sciaky D."/>
            <person name="Anderson P.A.W."/>
        </authorList>
    </citation>
    <scope>NUCLEOTIDE SEQUENCE [MRNA]</scope>
</reference>
<reference key="5">
    <citation type="journal article" date="2004" name="Genome Res.">
        <title>The status, quality, and expansion of the NIH full-length cDNA project: the Mammalian Gene Collection (MGC).</title>
        <authorList>
            <consortium name="The MGC Project Team"/>
        </authorList>
    </citation>
    <scope>NUCLEOTIDE SEQUENCE [LARGE SCALE MRNA]</scope>
    <source>
        <tissue>Blood</tissue>
    </source>
</reference>
<reference key="6">
    <citation type="journal article" date="1997" name="Biochemistry">
        <title>Calcium-induced structural transition in the regulatory domain of human cardiac troponin C.</title>
        <authorList>
            <person name="Spyracopoulos L."/>
            <person name="Li M.X."/>
            <person name="Sia S.K."/>
            <person name="Gagne S.M."/>
            <person name="Chandra M."/>
            <person name="Solaro R.J."/>
            <person name="Sykes B.D."/>
        </authorList>
    </citation>
    <scope>STRUCTURE BY NMR OF 1-89</scope>
    <source>
        <tissue>Heart muscle</tissue>
    </source>
</reference>
<reference key="7">
    <citation type="journal article" date="1997" name="Eur. J. Biochem.">
        <title>Structural and functional domains of the troponin complex revealed by limited digestion.</title>
        <authorList>
            <person name="Takeda S."/>
            <person name="Kobayashi T."/>
            <person name="Taniguchi H."/>
            <person name="Hayashi H."/>
            <person name="Maeda Y."/>
        </authorList>
    </citation>
    <scope>X-RAY CRYSTALLOGRAPHY (2.61 ANGSTROMS)</scope>
</reference>
<reference key="8">
    <citation type="journal article" date="2003" name="J. Biol. Chem.">
        <title>Structure and dynamics of the C-domain of human cardiac troponin C in complex with the inhibitory region of human cardiac troponin I.</title>
        <authorList>
            <person name="Lindhout D.A."/>
            <person name="Sykes B.D."/>
        </authorList>
    </citation>
    <scope>STRUCTURE BY NMR OF 89-161</scope>
    <source>
        <tissue>Heart muscle</tissue>
    </source>
</reference>
<reference key="9">
    <citation type="journal article" date="2001" name="Hum. Mutat.">
        <title>First mutation in cardiac troponin C, L29Q, in a patient with hypertrophic cardiomyopathy.</title>
        <authorList>
            <person name="Hoffmann B."/>
            <person name="Schmidt-Traub H."/>
            <person name="Perrot A."/>
            <person name="Osterziel K.J."/>
            <person name="Gessner R."/>
        </authorList>
    </citation>
    <scope>VARIANT CMH13 GLN-29</scope>
</reference>
<reference key="10">
    <citation type="journal article" date="2004" name="J. Am. Coll. Cardiol.">
        <title>Severe disease expression of cardiac troponin C and T mutations in patients with idiopathic dilated cardiomyopathy.</title>
        <authorList>
            <person name="Mogensen J."/>
            <person name="Murphy R.T."/>
            <person name="Shaw T."/>
            <person name="Bahl A."/>
            <person name="Redwood C."/>
            <person name="Watkins H."/>
            <person name="Burke M."/>
            <person name="Elliott P.M."/>
            <person name="McKenna W.J."/>
        </authorList>
    </citation>
    <scope>VARIANT CMD1Z ASP-159</scope>
</reference>
<reference key="11">
    <citation type="journal article" date="2005" name="FEBS J.">
        <title>Cardiac troponin C-L29Q, related to hypertrophic cardiomyopathy, hinders the transduction of the protein kinase A dependent phosphorylation signal from cardiac troponin I to C.</title>
        <authorList>
            <person name="Schmidtmann A."/>
            <person name="Lindow C."/>
            <person name="Villard S."/>
            <person name="Heuser A."/>
            <person name="Mugge A."/>
            <person name="Gessner R."/>
            <person name="Granier C."/>
            <person name="Jaquet K."/>
        </authorList>
    </citation>
    <scope>CHARACTERIZATION OF VARIANT CMH13 GLN-29</scope>
</reference>
<reference key="12">
    <citation type="journal article" date="2008" name="J. Mol. Cell. Cardiol.">
        <title>Molecular and functional characterization of novel hypertrophic cardiomyopathy susceptibility mutations in TNNC1-encoded troponin C.</title>
        <authorList>
            <person name="Landstrom A.P."/>
            <person name="Parvatiyar M.S."/>
            <person name="Pinto J.R."/>
            <person name="Marquardt M.L."/>
            <person name="Bos J.M."/>
            <person name="Tester D.J."/>
            <person name="Ommen S.R."/>
            <person name="Potter J.D."/>
            <person name="Ackerman M.J."/>
        </authorList>
    </citation>
    <scope>VARIANTS CMH13 VAL-8; TYR-84; ASP-134 AND GLU-145</scope>
    <scope>CHARACTERIZATION OF VARIANTS CMH13 VAL-8; TYR-84; ASP-134 AND GLU-145</scope>
</reference>
<reference key="13">
    <citation type="journal article" date="2009" name="J. Biol. Chem.">
        <title>A functional and structural study of troponin C mutations related to hypertrophic cardiomyopathy.</title>
        <authorList>
            <person name="Pinto J.R."/>
            <person name="Parvatiyar M.S."/>
            <person name="Jones M.A."/>
            <person name="Liang J."/>
            <person name="Ackerman M.J."/>
            <person name="Potter J.D."/>
        </authorList>
    </citation>
    <scope>CHARACTERIZATION OF VARIANTS CMH13 VAL-8; TYR-84; ASP-134 AND GLU-145</scope>
</reference>
<organism>
    <name type="scientific">Homo sapiens</name>
    <name type="common">Human</name>
    <dbReference type="NCBI Taxonomy" id="9606"/>
    <lineage>
        <taxon>Eukaryota</taxon>
        <taxon>Metazoa</taxon>
        <taxon>Chordata</taxon>
        <taxon>Craniata</taxon>
        <taxon>Vertebrata</taxon>
        <taxon>Euteleostomi</taxon>
        <taxon>Mammalia</taxon>
        <taxon>Eutheria</taxon>
        <taxon>Euarchontoglires</taxon>
        <taxon>Primates</taxon>
        <taxon>Haplorrhini</taxon>
        <taxon>Catarrhini</taxon>
        <taxon>Hominidae</taxon>
        <taxon>Homo</taxon>
    </lineage>
</organism>
<comment type="function">
    <text>Troponin is the central regulatory protein of striated muscle contraction. Tn consists of three components: Tn-I which is the inhibitor of actomyosin ATPase, Tn-T which contains the binding site for tropomyosin and Tn-C. The binding of calcium to Tn-C abolishes the inhibitory action of Tn on actin filaments.</text>
</comment>
<comment type="interaction">
    <interactant intactId="EBI-3906339">
        <id>P63316</id>
    </interactant>
    <interactant intactId="EBI-746692">
        <id>P19237</id>
        <label>TNNI1</label>
    </interactant>
    <organismsDiffer>false</organismsDiffer>
    <experiments>5</experiments>
</comment>
<comment type="interaction">
    <interactant intactId="EBI-3906339">
        <id>P63316</id>
    </interactant>
    <interactant intactId="EBI-7746394">
        <id>P48788</id>
        <label>TNNI2</label>
    </interactant>
    <organismsDiffer>false</organismsDiffer>
    <experiments>2</experiments>
</comment>
<comment type="interaction">
    <interactant intactId="EBI-3906339">
        <id>P63316</id>
    </interactant>
    <interactant intactId="EBI-704146">
        <id>P19429</id>
        <label>TNNI3</label>
    </interactant>
    <organismsDiffer>false</organismsDiffer>
    <experiments>5</experiments>
</comment>
<comment type="disease" evidence="4">
    <disease id="DI-00228">
        <name>Cardiomyopathy, dilated, 1Z</name>
        <acronym>CMD1Z</acronym>
        <description>A disorder characterized by ventricular dilation and impaired systolic function, resulting in congestive heart failure and arrhythmia. Patients are at risk of premature death.</description>
        <dbReference type="MIM" id="611879"/>
    </disease>
    <text>The disease is caused by variants affecting the gene represented in this entry.</text>
</comment>
<comment type="disease" evidence="3 5 6 7">
    <disease id="DI-02553">
        <name>Cardiomyopathy, familial hypertrophic, 13</name>
        <acronym>CMH13</acronym>
        <description>A hereditary heart disorder characterized by ventricular hypertrophy, which is usually asymmetric and often involves the interventricular septum. The symptoms include dyspnea, syncope, collapse, palpitations, and chest pain. They can be readily provoked by exercise. The disorder has inter- and intrafamilial variability ranging from benign to malignant forms with high risk of cardiac failure and sudden cardiac death.</description>
        <dbReference type="MIM" id="613243"/>
    </disease>
    <text>The disease is caused by variants affecting the gene represented in this entry.</text>
</comment>
<comment type="miscellaneous">
    <text>Cardiac muscle Tn-C can bind 3 calcium ions per molecule. Domain I does not bind calcium.</text>
</comment>
<comment type="similarity">
    <text evidence="9">Belongs to the troponin C family.</text>
</comment>
<protein>
    <recommendedName>
        <fullName>Troponin C, slow skeletal and cardiac muscles</fullName>
        <shortName>TN-C</shortName>
    </recommendedName>
</protein>
<gene>
    <name type="primary">TNNC1</name>
    <name type="synonym">TNNC</name>
</gene>